<evidence type="ECO:0000255" key="1">
    <source>
        <dbReference type="HAMAP-Rule" id="MF_00042"/>
    </source>
</evidence>
<evidence type="ECO:0000255" key="2">
    <source>
        <dbReference type="PROSITE-ProRule" id="PRU00408"/>
    </source>
</evidence>
<dbReference type="EC" id="3.1.26.4" evidence="1"/>
<dbReference type="EMBL" id="CP000133">
    <property type="protein sequence ID" value="ABC89774.1"/>
    <property type="molecule type" value="Genomic_DNA"/>
</dbReference>
<dbReference type="RefSeq" id="WP_011424310.1">
    <property type="nucleotide sequence ID" value="NC_007761.1"/>
</dbReference>
<dbReference type="SMR" id="Q2KBL2"/>
<dbReference type="KEGG" id="ret:RHE_CH00963"/>
<dbReference type="eggNOG" id="COG0328">
    <property type="taxonomic scope" value="Bacteria"/>
</dbReference>
<dbReference type="HOGENOM" id="CLU_030894_6_0_5"/>
<dbReference type="OrthoDB" id="7845843at2"/>
<dbReference type="Proteomes" id="UP000001936">
    <property type="component" value="Chromosome"/>
</dbReference>
<dbReference type="GO" id="GO:0005737">
    <property type="term" value="C:cytoplasm"/>
    <property type="evidence" value="ECO:0007669"/>
    <property type="project" value="UniProtKB-SubCell"/>
</dbReference>
<dbReference type="GO" id="GO:0000287">
    <property type="term" value="F:magnesium ion binding"/>
    <property type="evidence" value="ECO:0007669"/>
    <property type="project" value="UniProtKB-UniRule"/>
</dbReference>
<dbReference type="GO" id="GO:0003676">
    <property type="term" value="F:nucleic acid binding"/>
    <property type="evidence" value="ECO:0007669"/>
    <property type="project" value="InterPro"/>
</dbReference>
<dbReference type="GO" id="GO:0004523">
    <property type="term" value="F:RNA-DNA hybrid ribonuclease activity"/>
    <property type="evidence" value="ECO:0007669"/>
    <property type="project" value="UniProtKB-UniRule"/>
</dbReference>
<dbReference type="GO" id="GO:0043137">
    <property type="term" value="P:DNA replication, removal of RNA primer"/>
    <property type="evidence" value="ECO:0007669"/>
    <property type="project" value="TreeGrafter"/>
</dbReference>
<dbReference type="CDD" id="cd09278">
    <property type="entry name" value="RNase_HI_prokaryote_like"/>
    <property type="match status" value="1"/>
</dbReference>
<dbReference type="FunFam" id="3.30.420.10:FF:000089">
    <property type="entry name" value="Ribonuclease H"/>
    <property type="match status" value="1"/>
</dbReference>
<dbReference type="Gene3D" id="3.30.420.10">
    <property type="entry name" value="Ribonuclease H-like superfamily/Ribonuclease H"/>
    <property type="match status" value="1"/>
</dbReference>
<dbReference type="HAMAP" id="MF_00042">
    <property type="entry name" value="RNase_H"/>
    <property type="match status" value="1"/>
</dbReference>
<dbReference type="InterPro" id="IPR050092">
    <property type="entry name" value="RNase_H"/>
</dbReference>
<dbReference type="InterPro" id="IPR012337">
    <property type="entry name" value="RNaseH-like_sf"/>
</dbReference>
<dbReference type="InterPro" id="IPR002156">
    <property type="entry name" value="RNaseH_domain"/>
</dbReference>
<dbReference type="InterPro" id="IPR036397">
    <property type="entry name" value="RNaseH_sf"/>
</dbReference>
<dbReference type="InterPro" id="IPR022892">
    <property type="entry name" value="RNaseHI"/>
</dbReference>
<dbReference type="NCBIfam" id="NF001236">
    <property type="entry name" value="PRK00203.1"/>
    <property type="match status" value="1"/>
</dbReference>
<dbReference type="PANTHER" id="PTHR10642">
    <property type="entry name" value="RIBONUCLEASE H1"/>
    <property type="match status" value="1"/>
</dbReference>
<dbReference type="PANTHER" id="PTHR10642:SF26">
    <property type="entry name" value="RIBONUCLEASE H1"/>
    <property type="match status" value="1"/>
</dbReference>
<dbReference type="Pfam" id="PF00075">
    <property type="entry name" value="RNase_H"/>
    <property type="match status" value="1"/>
</dbReference>
<dbReference type="SUPFAM" id="SSF53098">
    <property type="entry name" value="Ribonuclease H-like"/>
    <property type="match status" value="1"/>
</dbReference>
<dbReference type="PROSITE" id="PS50879">
    <property type="entry name" value="RNASE_H_1"/>
    <property type="match status" value="1"/>
</dbReference>
<sequence>MKHVDIFTDGACSGNPGPGGWGAVLRYGEVEKELCGGEAETTNNRMELMAAISALQALKSPCEVDLYTDSAYVKDGISKWIFGWKKNGWKTSDKKPVKNAELWQALEEARNRHKVTLHWVKGHAGHPENERADELARRGMEPFKKGKAVSF</sequence>
<reference key="1">
    <citation type="journal article" date="2006" name="Proc. Natl. Acad. Sci. U.S.A.">
        <title>The partitioned Rhizobium etli genome: genetic and metabolic redundancy in seven interacting replicons.</title>
        <authorList>
            <person name="Gonzalez V."/>
            <person name="Santamaria R.I."/>
            <person name="Bustos P."/>
            <person name="Hernandez-Gonzalez I."/>
            <person name="Medrano-Soto A."/>
            <person name="Moreno-Hagelsieb G."/>
            <person name="Janga S.C."/>
            <person name="Ramirez M.A."/>
            <person name="Jimenez-Jacinto V."/>
            <person name="Collado-Vides J."/>
            <person name="Davila G."/>
        </authorList>
    </citation>
    <scope>NUCLEOTIDE SEQUENCE [LARGE SCALE GENOMIC DNA]</scope>
    <source>
        <strain>ATCC 51251 / DSM 11541 / JCM 21823 / NBRC 15573 / CFN 42</strain>
    </source>
</reference>
<keyword id="KW-0963">Cytoplasm</keyword>
<keyword id="KW-0255">Endonuclease</keyword>
<keyword id="KW-0378">Hydrolase</keyword>
<keyword id="KW-0460">Magnesium</keyword>
<keyword id="KW-0479">Metal-binding</keyword>
<keyword id="KW-0540">Nuclease</keyword>
<keyword id="KW-1185">Reference proteome</keyword>
<gene>
    <name evidence="1" type="primary">rnhA</name>
    <name type="ordered locus">RHE_CH00963</name>
</gene>
<organism>
    <name type="scientific">Rhizobium etli (strain ATCC 51251 / DSM 11541 / JCM 21823 / NBRC 15573 / CFN 42)</name>
    <dbReference type="NCBI Taxonomy" id="347834"/>
    <lineage>
        <taxon>Bacteria</taxon>
        <taxon>Pseudomonadati</taxon>
        <taxon>Pseudomonadota</taxon>
        <taxon>Alphaproteobacteria</taxon>
        <taxon>Hyphomicrobiales</taxon>
        <taxon>Rhizobiaceae</taxon>
        <taxon>Rhizobium/Agrobacterium group</taxon>
        <taxon>Rhizobium</taxon>
    </lineage>
</organism>
<comment type="function">
    <text evidence="1">Endonuclease that specifically degrades the RNA of RNA-DNA hybrids.</text>
</comment>
<comment type="catalytic activity">
    <reaction evidence="1">
        <text>Endonucleolytic cleavage to 5'-phosphomonoester.</text>
        <dbReference type="EC" id="3.1.26.4"/>
    </reaction>
</comment>
<comment type="cofactor">
    <cofactor evidence="1">
        <name>Mg(2+)</name>
        <dbReference type="ChEBI" id="CHEBI:18420"/>
    </cofactor>
    <text evidence="1">Binds 1 Mg(2+) ion per subunit. May bind a second metal ion at a regulatory site, or after substrate binding.</text>
</comment>
<comment type="subunit">
    <text evidence="1">Monomer.</text>
</comment>
<comment type="subcellular location">
    <subcellularLocation>
        <location evidence="1">Cytoplasm</location>
    </subcellularLocation>
</comment>
<comment type="similarity">
    <text evidence="1">Belongs to the RNase H family.</text>
</comment>
<protein>
    <recommendedName>
        <fullName evidence="1">Ribonuclease H</fullName>
        <shortName evidence="1">RNase H</shortName>
        <ecNumber evidence="1">3.1.26.4</ecNumber>
    </recommendedName>
</protein>
<name>RNH_RHIEC</name>
<feature type="chain" id="PRO_0000332661" description="Ribonuclease H">
    <location>
        <begin position="1"/>
        <end position="151"/>
    </location>
</feature>
<feature type="domain" description="RNase H type-1" evidence="2">
    <location>
        <begin position="1"/>
        <end position="141"/>
    </location>
</feature>
<feature type="binding site" evidence="1">
    <location>
        <position position="9"/>
    </location>
    <ligand>
        <name>Mg(2+)</name>
        <dbReference type="ChEBI" id="CHEBI:18420"/>
        <label>1</label>
    </ligand>
</feature>
<feature type="binding site" evidence="1">
    <location>
        <position position="9"/>
    </location>
    <ligand>
        <name>Mg(2+)</name>
        <dbReference type="ChEBI" id="CHEBI:18420"/>
        <label>2</label>
    </ligand>
</feature>
<feature type="binding site" evidence="1">
    <location>
        <position position="47"/>
    </location>
    <ligand>
        <name>Mg(2+)</name>
        <dbReference type="ChEBI" id="CHEBI:18420"/>
        <label>1</label>
    </ligand>
</feature>
<feature type="binding site" evidence="1">
    <location>
        <position position="69"/>
    </location>
    <ligand>
        <name>Mg(2+)</name>
        <dbReference type="ChEBI" id="CHEBI:18420"/>
        <label>1</label>
    </ligand>
</feature>
<feature type="binding site" evidence="1">
    <location>
        <position position="133"/>
    </location>
    <ligand>
        <name>Mg(2+)</name>
        <dbReference type="ChEBI" id="CHEBI:18420"/>
        <label>2</label>
    </ligand>
</feature>
<proteinExistence type="inferred from homology"/>
<accession>Q2KBL2</accession>